<comment type="function">
    <text evidence="1">ICAM proteins are ligands for the leukocyte adhesion protein LFA-1 (integrin alpha-L/beta-2). During leukocyte trans-endothelial migration, ICAM1 engagement promotes the assembly of endothelial apical cups through ARHGEF26/SGEF and RHOG activation (By similarity).</text>
</comment>
<comment type="subunit">
    <text evidence="2">Homodimer. Interacts with MUC1 and promotes cell aggregation in epithelial cells. Interacts with ARHGEF26/SGEF. Interacts (on T cell side) with CD81, CD247 and CD9 at immunological synapses between antigen-presenting cells and T cells.</text>
</comment>
<comment type="subcellular location">
    <subcellularLocation>
        <location evidence="1">Membrane</location>
        <topology evidence="1">Single-pass type I membrane protein</topology>
    </subcellularLocation>
</comment>
<comment type="PTM">
    <text evidence="1">Monoubiquitinated, which is promoted by MARCH9 and leads to endocytosis.</text>
</comment>
<comment type="similarity">
    <text evidence="5">Belongs to the immunoglobulin superfamily. ICAM family.</text>
</comment>
<protein>
    <recommendedName>
        <fullName>Intercellular adhesion molecule 1</fullName>
        <shortName>ICAM-1</shortName>
    </recommendedName>
    <cdAntigenName>CD54</cdAntigenName>
</protein>
<proteinExistence type="evidence at transcript level"/>
<keyword id="KW-0130">Cell adhesion</keyword>
<keyword id="KW-1015">Disulfide bond</keyword>
<keyword id="KW-0325">Glycoprotein</keyword>
<keyword id="KW-0393">Immunoglobulin domain</keyword>
<keyword id="KW-0472">Membrane</keyword>
<keyword id="KW-0597">Phosphoprotein</keyword>
<keyword id="KW-1185">Reference proteome</keyword>
<keyword id="KW-0677">Repeat</keyword>
<keyword id="KW-0732">Signal</keyword>
<keyword id="KW-0812">Transmembrane</keyword>
<keyword id="KW-1133">Transmembrane helix</keyword>
<keyword id="KW-0832">Ubl conjugation</keyword>
<name>ICAM1_PANTR</name>
<accession>Q28806</accession>
<accession>Q5NKW2</accession>
<dbReference type="EMBL" id="AF340033">
    <property type="protein sequence ID" value="AAQ14896.1"/>
    <property type="molecule type" value="mRNA"/>
</dbReference>
<dbReference type="EMBL" id="AF340034">
    <property type="protein sequence ID" value="AAQ14897.1"/>
    <property type="molecule type" value="mRNA"/>
</dbReference>
<dbReference type="EMBL" id="AF340035">
    <property type="protein sequence ID" value="AAQ14898.1"/>
    <property type="molecule type" value="mRNA"/>
</dbReference>
<dbReference type="EMBL" id="M86848">
    <property type="protein sequence ID" value="AAA35415.1"/>
    <property type="molecule type" value="mRNA"/>
</dbReference>
<dbReference type="RefSeq" id="NP_001009946.1">
    <property type="nucleotide sequence ID" value="NM_001009946.1"/>
</dbReference>
<dbReference type="SMR" id="Q28806"/>
<dbReference type="FunCoup" id="Q28806">
    <property type="interactions" value="540"/>
</dbReference>
<dbReference type="STRING" id="9598.ENSPTRP00000084171"/>
<dbReference type="GlyCosmos" id="Q28806">
    <property type="glycosylation" value="7 sites, No reported glycans"/>
</dbReference>
<dbReference type="PaxDb" id="9598-ENSPTRP00000017827"/>
<dbReference type="Ensembl" id="ENSPTRT00000019261.5">
    <property type="protein sequence ID" value="ENSPTRP00000017827.4"/>
    <property type="gene ID" value="ENSPTRG00000010463.5"/>
</dbReference>
<dbReference type="GeneID" id="450196"/>
<dbReference type="KEGG" id="ptr:450196"/>
<dbReference type="CTD" id="3383"/>
<dbReference type="VGNC" id="VGNC:2351">
    <property type="gene designation" value="ICAM1"/>
</dbReference>
<dbReference type="eggNOG" id="ENOG502S45R">
    <property type="taxonomic scope" value="Eukaryota"/>
</dbReference>
<dbReference type="GeneTree" id="ENSGT00940000162311"/>
<dbReference type="HOGENOM" id="CLU_036160_1_1_1"/>
<dbReference type="InParanoid" id="Q28806"/>
<dbReference type="OMA" id="NLTVYWF"/>
<dbReference type="OrthoDB" id="10881at9604"/>
<dbReference type="TreeFam" id="TF333745"/>
<dbReference type="Proteomes" id="UP000002277">
    <property type="component" value="Chromosome 19"/>
</dbReference>
<dbReference type="Bgee" id="ENSPTRG00000010463">
    <property type="expression patterns" value="Expressed in lung and 22 other cell types or tissues"/>
</dbReference>
<dbReference type="GO" id="GO:0005886">
    <property type="term" value="C:plasma membrane"/>
    <property type="evidence" value="ECO:0000318"/>
    <property type="project" value="GO_Central"/>
</dbReference>
<dbReference type="GO" id="GO:0005178">
    <property type="term" value="F:integrin binding"/>
    <property type="evidence" value="ECO:0000318"/>
    <property type="project" value="GO_Central"/>
</dbReference>
<dbReference type="GO" id="GO:0007155">
    <property type="term" value="P:cell adhesion"/>
    <property type="evidence" value="ECO:0000318"/>
    <property type="project" value="GO_Central"/>
</dbReference>
<dbReference type="GO" id="GO:0098609">
    <property type="term" value="P:cell-cell adhesion"/>
    <property type="evidence" value="ECO:0007669"/>
    <property type="project" value="InterPro"/>
</dbReference>
<dbReference type="CDD" id="cd20996">
    <property type="entry name" value="IgI_N_ICAM-1"/>
    <property type="match status" value="1"/>
</dbReference>
<dbReference type="FunFam" id="2.60.40.10:FF:000194">
    <property type="entry name" value="Intercellular adhesion molecule 1"/>
    <property type="match status" value="1"/>
</dbReference>
<dbReference type="FunFam" id="2.60.40.10:FF:000459">
    <property type="entry name" value="Intercellular adhesion molecule 1"/>
    <property type="match status" value="1"/>
</dbReference>
<dbReference type="FunFam" id="2.60.40.10:FF:000641">
    <property type="entry name" value="Intercellular adhesion molecule 1"/>
    <property type="match status" value="1"/>
</dbReference>
<dbReference type="FunFam" id="2.60.40.10:FF:000648">
    <property type="entry name" value="Intercellular adhesion molecule 1"/>
    <property type="match status" value="1"/>
</dbReference>
<dbReference type="FunFam" id="2.60.40.10:FF:000338">
    <property type="entry name" value="intercellular adhesion molecule 5"/>
    <property type="match status" value="1"/>
</dbReference>
<dbReference type="Gene3D" id="2.60.40.10">
    <property type="entry name" value="Immunoglobulins"/>
    <property type="match status" value="5"/>
</dbReference>
<dbReference type="InterPro" id="IPR003988">
    <property type="entry name" value="ICAM"/>
</dbReference>
<dbReference type="InterPro" id="IPR048679">
    <property type="entry name" value="ICAM1_3_5_D2"/>
</dbReference>
<dbReference type="InterPro" id="IPR013768">
    <property type="entry name" value="ICAM_N"/>
</dbReference>
<dbReference type="InterPro" id="IPR047012">
    <property type="entry name" value="ICAM_VCAM"/>
</dbReference>
<dbReference type="InterPro" id="IPR003987">
    <property type="entry name" value="ICAM_VCAM_N"/>
</dbReference>
<dbReference type="InterPro" id="IPR007110">
    <property type="entry name" value="Ig-like_dom"/>
</dbReference>
<dbReference type="InterPro" id="IPR036179">
    <property type="entry name" value="Ig-like_dom_sf"/>
</dbReference>
<dbReference type="InterPro" id="IPR013783">
    <property type="entry name" value="Ig-like_fold"/>
</dbReference>
<dbReference type="InterPro" id="IPR003599">
    <property type="entry name" value="Ig_sub"/>
</dbReference>
<dbReference type="PANTHER" id="PTHR13771">
    <property type="entry name" value="INTERCELLULAR ADHESION MOLECULE"/>
    <property type="match status" value="1"/>
</dbReference>
<dbReference type="PANTHER" id="PTHR13771:SF18">
    <property type="entry name" value="INTERCELLULAR ADHESION MOLECULE 1"/>
    <property type="match status" value="1"/>
</dbReference>
<dbReference type="Pfam" id="PF21146">
    <property type="entry name" value="ICAM1_3_5_D2"/>
    <property type="match status" value="1"/>
</dbReference>
<dbReference type="Pfam" id="PF03921">
    <property type="entry name" value="ICAM_N"/>
    <property type="match status" value="1"/>
</dbReference>
<dbReference type="PRINTS" id="PR01473">
    <property type="entry name" value="ICAM"/>
</dbReference>
<dbReference type="PRINTS" id="PR01472">
    <property type="entry name" value="ICAMVCAM1"/>
</dbReference>
<dbReference type="SMART" id="SM00409">
    <property type="entry name" value="IG"/>
    <property type="match status" value="3"/>
</dbReference>
<dbReference type="SUPFAM" id="SSF48726">
    <property type="entry name" value="Immunoglobulin"/>
    <property type="match status" value="5"/>
</dbReference>
<dbReference type="PROSITE" id="PS50835">
    <property type="entry name" value="IG_LIKE"/>
    <property type="match status" value="1"/>
</dbReference>
<reference key="1">
    <citation type="submission" date="2001-01" db="EMBL/GenBank/DDBJ databases">
        <title>The chimpanzee ICAM proteins have been positively selected.</title>
        <authorList>
            <person name="Messier W."/>
            <person name="Walter N.A.R."/>
            <person name="Hink R.L."/>
        </authorList>
    </citation>
    <scope>NUCLEOTIDE SEQUENCE [MRNA]</scope>
    <source>
        <strain>Isolate Bonnie</strain>
        <strain>Isolate Caesar</strain>
        <strain>Isolate Jenny</strain>
        <tissue>Blood</tissue>
    </source>
</reference>
<reference key="2">
    <citation type="journal article" date="1997" name="Am. J. Respir. Crit. Care Med.">
        <title>Prevention of rhinovirus infection in chimpanzees by soluble intercellular adhesion molecule-1.</title>
        <authorList>
            <person name="Huguenel E.D."/>
            <person name="Cohn D."/>
            <person name="Dockum D.P."/>
            <person name="Greve J.M."/>
            <person name="Fournel M.A."/>
            <person name="Hammond L."/>
            <person name="Irwin R."/>
            <person name="Mahoney J."/>
            <person name="McClelland A."/>
            <person name="Muchmore E."/>
            <person name="Ohlin A.C."/>
            <person name="Scuderi P."/>
        </authorList>
    </citation>
    <scope>NUCLEOTIDE SEQUENCE [MRNA] OF 28-532</scope>
</reference>
<sequence>MAPSSPRPALPALLVLLGALFPGPGNAQTSVSPPKVILPRGGSVQVTCSTSCDQPDLLGIETPLPKKELLLGGNNWKVYELSNVQEDSQPMCYSNCPDGQSTAKTFLTVYWTPERVELAPLPSWQPVGKDLTLRCQVEGGAPRANLTVVLLRGEKELKREPAVGEPAEVTTTVLVERDHHGANFSCRTELDLRPQGLQLFENTSAPHQLQTFVLPATPPQLVSPRVLEVDTQGTVVCSLDGLFPVLEAQVHLALGDQRLNPTVTYGNDSFSAKASVSVTAEDEGTQRLTCAVILGNQSRETLQTVTIYSFPAPNVILTKPEVSEGTEVTVKCEAHPRAKVTLNGVPAQPVGPRVQLLLKATPEDNGRSFSCSATLEVAGQLIHKNQTRELRVLYGPRLDERDCPGNWTWPENSQQTPMCQASGNPLPELKCLKDGTFPLPVGESVTVTRDLEGTYLCRARSTQGEVTRKVTVNVLSPRYEIVIITVVAAAVIMGTAGLSTYLYNRQRKIRKYRLQQAQKGTPMKPNTQATPP</sequence>
<organism>
    <name type="scientific">Pan troglodytes</name>
    <name type="common">Chimpanzee</name>
    <dbReference type="NCBI Taxonomy" id="9598"/>
    <lineage>
        <taxon>Eukaryota</taxon>
        <taxon>Metazoa</taxon>
        <taxon>Chordata</taxon>
        <taxon>Craniata</taxon>
        <taxon>Vertebrata</taxon>
        <taxon>Euteleostomi</taxon>
        <taxon>Mammalia</taxon>
        <taxon>Eutheria</taxon>
        <taxon>Euarchontoglires</taxon>
        <taxon>Primates</taxon>
        <taxon>Haplorrhini</taxon>
        <taxon>Catarrhini</taxon>
        <taxon>Hominidae</taxon>
        <taxon>Pan</taxon>
    </lineage>
</organism>
<gene>
    <name type="primary">ICAM1</name>
</gene>
<feature type="signal peptide" evidence="1">
    <location>
        <begin position="1"/>
        <end position="27"/>
    </location>
</feature>
<feature type="chain" id="PRO_0000014787" description="Intercellular adhesion molecule 1">
    <location>
        <begin position="28"/>
        <end position="532"/>
    </location>
</feature>
<feature type="topological domain" description="Extracellular" evidence="3">
    <location>
        <begin position="28"/>
        <end position="480"/>
    </location>
</feature>
<feature type="transmembrane region" description="Helical" evidence="3">
    <location>
        <begin position="481"/>
        <end position="503"/>
    </location>
</feature>
<feature type="topological domain" description="Cytoplasmic" evidence="3">
    <location>
        <begin position="504"/>
        <end position="532"/>
    </location>
</feature>
<feature type="domain" description="Ig-like C2-type 1">
    <location>
        <begin position="41"/>
        <end position="103"/>
    </location>
</feature>
<feature type="domain" description="Ig-like C2-type 2">
    <location>
        <begin position="128"/>
        <end position="193"/>
    </location>
</feature>
<feature type="domain" description="Ig-like C2-type 3">
    <location>
        <begin position="230"/>
        <end position="297"/>
    </location>
</feature>
<feature type="domain" description="Ig-like C2-type 4">
    <location>
        <begin position="325"/>
        <end position="378"/>
    </location>
</feature>
<feature type="domain" description="Ig-like C2-type 5">
    <location>
        <begin position="412"/>
        <end position="464"/>
    </location>
</feature>
<feature type="short sequence motif" description="Cell attachment site; atypical" evidence="3">
    <location>
        <begin position="152"/>
        <end position="154"/>
    </location>
</feature>
<feature type="modified residue" description="Phosphothreonine" evidence="2">
    <location>
        <position position="521"/>
    </location>
</feature>
<feature type="modified residue" description="Phosphothreonine" evidence="2">
    <location>
        <position position="530"/>
    </location>
</feature>
<feature type="glycosylation site" description="N-linked (GlcNAc...) asparagine" evidence="3">
    <location>
        <position position="145"/>
    </location>
</feature>
<feature type="glycosylation site" description="N-linked (GlcNAc...) asparagine" evidence="3">
    <location>
        <position position="183"/>
    </location>
</feature>
<feature type="glycosylation site" description="N-linked (GlcNAc...) asparagine" evidence="3">
    <location>
        <position position="202"/>
    </location>
</feature>
<feature type="glycosylation site" description="N-linked (GlcNAc...) asparagine" evidence="3">
    <location>
        <position position="267"/>
    </location>
</feature>
<feature type="glycosylation site" description="N-linked (GlcNAc...) asparagine" evidence="3">
    <location>
        <position position="296"/>
    </location>
</feature>
<feature type="glycosylation site" description="N-linked (GlcNAc...) asparagine" evidence="3">
    <location>
        <position position="385"/>
    </location>
</feature>
<feature type="glycosylation site" description="N-linked (GlcNAc...) asparagine" evidence="3">
    <location>
        <position position="406"/>
    </location>
</feature>
<feature type="disulfide bond" evidence="4">
    <location>
        <begin position="48"/>
        <end position="92"/>
    </location>
</feature>
<feature type="disulfide bond" evidence="4">
    <location>
        <begin position="52"/>
        <end position="96"/>
    </location>
</feature>
<feature type="disulfide bond" evidence="4">
    <location>
        <begin position="135"/>
        <end position="186"/>
    </location>
</feature>
<feature type="disulfide bond" evidence="4">
    <location>
        <begin position="237"/>
        <end position="290"/>
    </location>
</feature>
<feature type="disulfide bond" evidence="4">
    <location>
        <begin position="332"/>
        <end position="371"/>
    </location>
</feature>
<feature type="disulfide bond" evidence="2">
    <location>
        <begin position="403"/>
        <end position="419"/>
    </location>
</feature>
<feature type="disulfide bond" evidence="4">
    <location>
        <begin position="419"/>
        <end position="457"/>
    </location>
</feature>
<feature type="disulfide bond" evidence="2">
    <location>
        <begin position="431"/>
        <end position="457"/>
    </location>
</feature>
<evidence type="ECO:0000250" key="1"/>
<evidence type="ECO:0000250" key="2">
    <source>
        <dbReference type="UniProtKB" id="P05362"/>
    </source>
</evidence>
<evidence type="ECO:0000255" key="3"/>
<evidence type="ECO:0000255" key="4">
    <source>
        <dbReference type="PROSITE-ProRule" id="PRU00114"/>
    </source>
</evidence>
<evidence type="ECO:0000305" key="5"/>